<evidence type="ECO:0000255" key="1">
    <source>
        <dbReference type="HAMAP-Rule" id="MF_01147"/>
    </source>
</evidence>
<sequence>MFLLITYPVFDPVAISLGPIAIRWYALAYIGGIMLGWLYARALLRSEKLWGGPAPISVVQLDDFILWVTIAIIVGGRVGYVLFYNPDYFIRYPAQIFQLWNGGMSFHGGFMGCVAAVILFCRRHGLPILSLGDVATAVGPIGLFLGRIANFINSELWGRPADPGLPWAMVFPNGGPLPRHPSQLYEAALEGILLFTILALMIRLGALKRPGLVLGSFIALYAMARIVAEFFREPDPQLGFLWGGLTMGMLLSIPMVIIGLAIVYAAWSRGSRASDAQASPNSGASTKVDRD</sequence>
<organism>
    <name type="scientific">Nitrobacter winogradskyi (strain ATCC 25391 / DSM 10237 / CIP 104748 / NCIMB 11846 / Nb-255)</name>
    <dbReference type="NCBI Taxonomy" id="323098"/>
    <lineage>
        <taxon>Bacteria</taxon>
        <taxon>Pseudomonadati</taxon>
        <taxon>Pseudomonadota</taxon>
        <taxon>Alphaproteobacteria</taxon>
        <taxon>Hyphomicrobiales</taxon>
        <taxon>Nitrobacteraceae</taxon>
        <taxon>Nitrobacter</taxon>
    </lineage>
</organism>
<accession>Q3SPN4</accession>
<comment type="function">
    <text evidence="1">Catalyzes the transfer of the diacylglyceryl group from phosphatidylglycerol to the sulfhydryl group of the N-terminal cysteine of a prolipoprotein, the first step in the formation of mature lipoproteins.</text>
</comment>
<comment type="catalytic activity">
    <reaction evidence="1">
        <text>L-cysteinyl-[prolipoprotein] + a 1,2-diacyl-sn-glycero-3-phospho-(1'-sn-glycerol) = an S-1,2-diacyl-sn-glyceryl-L-cysteinyl-[prolipoprotein] + sn-glycerol 1-phosphate + H(+)</text>
        <dbReference type="Rhea" id="RHEA:56712"/>
        <dbReference type="Rhea" id="RHEA-COMP:14679"/>
        <dbReference type="Rhea" id="RHEA-COMP:14680"/>
        <dbReference type="ChEBI" id="CHEBI:15378"/>
        <dbReference type="ChEBI" id="CHEBI:29950"/>
        <dbReference type="ChEBI" id="CHEBI:57685"/>
        <dbReference type="ChEBI" id="CHEBI:64716"/>
        <dbReference type="ChEBI" id="CHEBI:140658"/>
        <dbReference type="EC" id="2.5.1.145"/>
    </reaction>
</comment>
<comment type="pathway">
    <text evidence="1">Protein modification; lipoprotein biosynthesis (diacylglyceryl transfer).</text>
</comment>
<comment type="subcellular location">
    <subcellularLocation>
        <location evidence="1">Cell inner membrane</location>
        <topology evidence="1">Multi-pass membrane protein</topology>
    </subcellularLocation>
</comment>
<comment type="similarity">
    <text evidence="1">Belongs to the Lgt family.</text>
</comment>
<dbReference type="EC" id="2.5.1.145" evidence="1"/>
<dbReference type="EMBL" id="CP000115">
    <property type="protein sequence ID" value="ABA05757.1"/>
    <property type="molecule type" value="Genomic_DNA"/>
</dbReference>
<dbReference type="RefSeq" id="WP_011315708.1">
    <property type="nucleotide sequence ID" value="NC_007406.1"/>
</dbReference>
<dbReference type="SMR" id="Q3SPN4"/>
<dbReference type="STRING" id="323098.Nwi_2504"/>
<dbReference type="KEGG" id="nwi:Nwi_2504"/>
<dbReference type="eggNOG" id="COG0682">
    <property type="taxonomic scope" value="Bacteria"/>
</dbReference>
<dbReference type="HOGENOM" id="CLU_013386_1_0_5"/>
<dbReference type="OrthoDB" id="871140at2"/>
<dbReference type="UniPathway" id="UPA00664"/>
<dbReference type="Proteomes" id="UP000002531">
    <property type="component" value="Chromosome"/>
</dbReference>
<dbReference type="GO" id="GO:0005886">
    <property type="term" value="C:plasma membrane"/>
    <property type="evidence" value="ECO:0007669"/>
    <property type="project" value="UniProtKB-SubCell"/>
</dbReference>
<dbReference type="GO" id="GO:0008961">
    <property type="term" value="F:phosphatidylglycerol-prolipoprotein diacylglyceryl transferase activity"/>
    <property type="evidence" value="ECO:0007669"/>
    <property type="project" value="UniProtKB-UniRule"/>
</dbReference>
<dbReference type="GO" id="GO:0042158">
    <property type="term" value="P:lipoprotein biosynthetic process"/>
    <property type="evidence" value="ECO:0007669"/>
    <property type="project" value="UniProtKB-UniRule"/>
</dbReference>
<dbReference type="HAMAP" id="MF_01147">
    <property type="entry name" value="Lgt"/>
    <property type="match status" value="1"/>
</dbReference>
<dbReference type="InterPro" id="IPR001640">
    <property type="entry name" value="Lgt"/>
</dbReference>
<dbReference type="NCBIfam" id="TIGR00544">
    <property type="entry name" value="lgt"/>
    <property type="match status" value="1"/>
</dbReference>
<dbReference type="PANTHER" id="PTHR30589:SF0">
    <property type="entry name" value="PHOSPHATIDYLGLYCEROL--PROLIPOPROTEIN DIACYLGLYCERYL TRANSFERASE"/>
    <property type="match status" value="1"/>
</dbReference>
<dbReference type="PANTHER" id="PTHR30589">
    <property type="entry name" value="PROLIPOPROTEIN DIACYLGLYCERYL TRANSFERASE"/>
    <property type="match status" value="1"/>
</dbReference>
<dbReference type="Pfam" id="PF01790">
    <property type="entry name" value="LGT"/>
    <property type="match status" value="1"/>
</dbReference>
<dbReference type="PROSITE" id="PS01311">
    <property type="entry name" value="LGT"/>
    <property type="match status" value="1"/>
</dbReference>
<name>LGT_NITWN</name>
<gene>
    <name evidence="1" type="primary">lgt</name>
    <name type="ordered locus">Nwi_2504</name>
</gene>
<proteinExistence type="inferred from homology"/>
<keyword id="KW-0997">Cell inner membrane</keyword>
<keyword id="KW-1003">Cell membrane</keyword>
<keyword id="KW-0472">Membrane</keyword>
<keyword id="KW-1185">Reference proteome</keyword>
<keyword id="KW-0808">Transferase</keyword>
<keyword id="KW-0812">Transmembrane</keyword>
<keyword id="KW-1133">Transmembrane helix</keyword>
<feature type="chain" id="PRO_1000053461" description="Phosphatidylglycerol--prolipoprotein diacylglyceryl transferase">
    <location>
        <begin position="1"/>
        <end position="291"/>
    </location>
</feature>
<feature type="transmembrane region" description="Helical" evidence="1">
    <location>
        <begin position="24"/>
        <end position="44"/>
    </location>
</feature>
<feature type="transmembrane region" description="Helical" evidence="1">
    <location>
        <begin position="64"/>
        <end position="84"/>
    </location>
</feature>
<feature type="transmembrane region" description="Helical" evidence="1">
    <location>
        <begin position="100"/>
        <end position="120"/>
    </location>
</feature>
<feature type="transmembrane region" description="Helical" evidence="1">
    <location>
        <begin position="125"/>
        <end position="145"/>
    </location>
</feature>
<feature type="transmembrane region" description="Helical" evidence="1">
    <location>
        <begin position="187"/>
        <end position="207"/>
    </location>
</feature>
<feature type="transmembrane region" description="Helical" evidence="1">
    <location>
        <begin position="211"/>
        <end position="231"/>
    </location>
</feature>
<feature type="transmembrane region" description="Helical" evidence="1">
    <location>
        <begin position="247"/>
        <end position="267"/>
    </location>
</feature>
<feature type="binding site" evidence="1">
    <location>
        <position position="147"/>
    </location>
    <ligand>
        <name>a 1,2-diacyl-sn-glycero-3-phospho-(1'-sn-glycerol)</name>
        <dbReference type="ChEBI" id="CHEBI:64716"/>
    </ligand>
</feature>
<protein>
    <recommendedName>
        <fullName evidence="1">Phosphatidylglycerol--prolipoprotein diacylglyceryl transferase</fullName>
        <ecNumber evidence="1">2.5.1.145</ecNumber>
    </recommendedName>
</protein>
<reference key="1">
    <citation type="journal article" date="2006" name="Appl. Environ. Microbiol.">
        <title>Genome sequence of the chemolithoautotrophic nitrite-oxidizing bacterium Nitrobacter winogradskyi Nb-255.</title>
        <authorList>
            <person name="Starkenburg S.R."/>
            <person name="Chain P.S.G."/>
            <person name="Sayavedra-Soto L.A."/>
            <person name="Hauser L."/>
            <person name="Land M.L."/>
            <person name="Larimer F.W."/>
            <person name="Malfatti S.A."/>
            <person name="Klotz M.G."/>
            <person name="Bottomley P.J."/>
            <person name="Arp D.J."/>
            <person name="Hickey W.J."/>
        </authorList>
    </citation>
    <scope>NUCLEOTIDE SEQUENCE [LARGE SCALE GENOMIC DNA]</scope>
    <source>
        <strain>ATCC 25391 / DSM 10237 / CIP 104748 / NCIMB 11846 / Nb-255</strain>
    </source>
</reference>